<name>Y2474_LISMO</name>
<comment type="function">
    <text evidence="1">Displays ATPase and GTPase activities.</text>
</comment>
<comment type="similarity">
    <text evidence="1">Belongs to the RapZ-like family.</text>
</comment>
<organism>
    <name type="scientific">Listeria monocytogenes serovar 1/2a (strain ATCC BAA-679 / EGD-e)</name>
    <dbReference type="NCBI Taxonomy" id="169963"/>
    <lineage>
        <taxon>Bacteria</taxon>
        <taxon>Bacillati</taxon>
        <taxon>Bacillota</taxon>
        <taxon>Bacilli</taxon>
        <taxon>Bacillales</taxon>
        <taxon>Listeriaceae</taxon>
        <taxon>Listeria</taxon>
    </lineage>
</organism>
<feature type="chain" id="PRO_0000107726" description="Nucleotide-binding protein lmo2474">
    <location>
        <begin position="1"/>
        <end position="291"/>
    </location>
</feature>
<feature type="binding site" evidence="1">
    <location>
        <begin position="13"/>
        <end position="20"/>
    </location>
    <ligand>
        <name>ATP</name>
        <dbReference type="ChEBI" id="CHEBI:30616"/>
    </ligand>
</feature>
<feature type="binding site" evidence="1">
    <location>
        <begin position="63"/>
        <end position="66"/>
    </location>
    <ligand>
        <name>GTP</name>
        <dbReference type="ChEBI" id="CHEBI:37565"/>
    </ligand>
</feature>
<sequence length="291" mass="33553">MASKQLKLVIITGMSGAGKTVAMQSLEDLGYFCVDNLPPSLLPKFWELMKESDKMDKIALVMDLRGREFFDSIEPALDELDNTNFITTKILFLEADDKVLVSRYKETRRHHPLEPNGSVLDGINAERELLSDLKGRSQLVINTSNMAPRELRERINNEFQTEDKDIFNVQLMSFGFKYGIPIDADLVFDVRFLPNPHYIDKMRPLTGLDEDVYEYVMKWPETQTFLDKLVDLLMFTLPFYKREGKTQLVIAIGCTGGQHRSVALTEFVGKTIQQKYETTISHRDMKRRKGR</sequence>
<accession>Q8Y4G9</accession>
<dbReference type="EMBL" id="AL591983">
    <property type="protein sequence ID" value="CAD00552.1"/>
    <property type="molecule type" value="Genomic_DNA"/>
</dbReference>
<dbReference type="PIR" id="AB1384">
    <property type="entry name" value="AB1384"/>
</dbReference>
<dbReference type="RefSeq" id="NP_465997.1">
    <property type="nucleotide sequence ID" value="NC_003210.1"/>
</dbReference>
<dbReference type="SMR" id="Q8Y4G9"/>
<dbReference type="STRING" id="169963.gene:17595185"/>
<dbReference type="PaxDb" id="169963-lmo2474"/>
<dbReference type="EnsemblBacteria" id="CAD00552">
    <property type="protein sequence ID" value="CAD00552"/>
    <property type="gene ID" value="CAD00552"/>
</dbReference>
<dbReference type="GeneID" id="987349"/>
<dbReference type="KEGG" id="lmo:lmo2474"/>
<dbReference type="PATRIC" id="fig|169963.11.peg.2534"/>
<dbReference type="eggNOG" id="COG1660">
    <property type="taxonomic scope" value="Bacteria"/>
</dbReference>
<dbReference type="HOGENOM" id="CLU_059558_0_0_9"/>
<dbReference type="OrthoDB" id="9784461at2"/>
<dbReference type="PhylomeDB" id="Q8Y4G9"/>
<dbReference type="BioCyc" id="LMON169963:LMO2474-MONOMER"/>
<dbReference type="Proteomes" id="UP000000817">
    <property type="component" value="Chromosome"/>
</dbReference>
<dbReference type="GO" id="GO:0005524">
    <property type="term" value="F:ATP binding"/>
    <property type="evidence" value="ECO:0007669"/>
    <property type="project" value="UniProtKB-UniRule"/>
</dbReference>
<dbReference type="GO" id="GO:0005525">
    <property type="term" value="F:GTP binding"/>
    <property type="evidence" value="ECO:0007669"/>
    <property type="project" value="UniProtKB-UniRule"/>
</dbReference>
<dbReference type="GO" id="GO:0060090">
    <property type="term" value="F:molecular adaptor activity"/>
    <property type="evidence" value="ECO:0000318"/>
    <property type="project" value="GO_Central"/>
</dbReference>
<dbReference type="Gene3D" id="3.40.50.300">
    <property type="entry name" value="P-loop containing nucleotide triphosphate hydrolases"/>
    <property type="match status" value="1"/>
</dbReference>
<dbReference type="HAMAP" id="MF_00636">
    <property type="entry name" value="RapZ_like"/>
    <property type="match status" value="1"/>
</dbReference>
<dbReference type="InterPro" id="IPR027417">
    <property type="entry name" value="P-loop_NTPase"/>
</dbReference>
<dbReference type="InterPro" id="IPR005337">
    <property type="entry name" value="RapZ-like"/>
</dbReference>
<dbReference type="InterPro" id="IPR053930">
    <property type="entry name" value="RapZ-like_N"/>
</dbReference>
<dbReference type="InterPro" id="IPR053931">
    <property type="entry name" value="RapZ_C"/>
</dbReference>
<dbReference type="NCBIfam" id="NF003828">
    <property type="entry name" value="PRK05416.1"/>
    <property type="match status" value="1"/>
</dbReference>
<dbReference type="PANTHER" id="PTHR30448">
    <property type="entry name" value="RNASE ADAPTER PROTEIN RAPZ"/>
    <property type="match status" value="1"/>
</dbReference>
<dbReference type="PANTHER" id="PTHR30448:SF0">
    <property type="entry name" value="RNASE ADAPTER PROTEIN RAPZ"/>
    <property type="match status" value="1"/>
</dbReference>
<dbReference type="Pfam" id="PF22740">
    <property type="entry name" value="PapZ_C"/>
    <property type="match status" value="1"/>
</dbReference>
<dbReference type="Pfam" id="PF03668">
    <property type="entry name" value="RapZ-like_N"/>
    <property type="match status" value="1"/>
</dbReference>
<dbReference type="PIRSF" id="PIRSF005052">
    <property type="entry name" value="P-loopkin"/>
    <property type="match status" value="1"/>
</dbReference>
<dbReference type="SUPFAM" id="SSF52540">
    <property type="entry name" value="P-loop containing nucleoside triphosphate hydrolases"/>
    <property type="match status" value="1"/>
</dbReference>
<keyword id="KW-0067">ATP-binding</keyword>
<keyword id="KW-0342">GTP-binding</keyword>
<keyword id="KW-0547">Nucleotide-binding</keyword>
<keyword id="KW-1185">Reference proteome</keyword>
<protein>
    <recommendedName>
        <fullName evidence="1">Nucleotide-binding protein lmo2474</fullName>
    </recommendedName>
</protein>
<evidence type="ECO:0000255" key="1">
    <source>
        <dbReference type="HAMAP-Rule" id="MF_00636"/>
    </source>
</evidence>
<reference key="1">
    <citation type="journal article" date="2001" name="Science">
        <title>Comparative genomics of Listeria species.</title>
        <authorList>
            <person name="Glaser P."/>
            <person name="Frangeul L."/>
            <person name="Buchrieser C."/>
            <person name="Rusniok C."/>
            <person name="Amend A."/>
            <person name="Baquero F."/>
            <person name="Berche P."/>
            <person name="Bloecker H."/>
            <person name="Brandt P."/>
            <person name="Chakraborty T."/>
            <person name="Charbit A."/>
            <person name="Chetouani F."/>
            <person name="Couve E."/>
            <person name="de Daruvar A."/>
            <person name="Dehoux P."/>
            <person name="Domann E."/>
            <person name="Dominguez-Bernal G."/>
            <person name="Duchaud E."/>
            <person name="Durant L."/>
            <person name="Dussurget O."/>
            <person name="Entian K.-D."/>
            <person name="Fsihi H."/>
            <person name="Garcia-del Portillo F."/>
            <person name="Garrido P."/>
            <person name="Gautier L."/>
            <person name="Goebel W."/>
            <person name="Gomez-Lopez N."/>
            <person name="Hain T."/>
            <person name="Hauf J."/>
            <person name="Jackson D."/>
            <person name="Jones L.-M."/>
            <person name="Kaerst U."/>
            <person name="Kreft J."/>
            <person name="Kuhn M."/>
            <person name="Kunst F."/>
            <person name="Kurapkat G."/>
            <person name="Madueno E."/>
            <person name="Maitournam A."/>
            <person name="Mata Vicente J."/>
            <person name="Ng E."/>
            <person name="Nedjari H."/>
            <person name="Nordsiek G."/>
            <person name="Novella S."/>
            <person name="de Pablos B."/>
            <person name="Perez-Diaz J.-C."/>
            <person name="Purcell R."/>
            <person name="Remmel B."/>
            <person name="Rose M."/>
            <person name="Schlueter T."/>
            <person name="Simoes N."/>
            <person name="Tierrez A."/>
            <person name="Vazquez-Boland J.-A."/>
            <person name="Voss H."/>
            <person name="Wehland J."/>
            <person name="Cossart P."/>
        </authorList>
    </citation>
    <scope>NUCLEOTIDE SEQUENCE [LARGE SCALE GENOMIC DNA]</scope>
    <source>
        <strain>ATCC BAA-679 / EGD-e</strain>
    </source>
</reference>
<proteinExistence type="inferred from homology"/>
<gene>
    <name type="ordered locus">lmo2474</name>
</gene>